<comment type="function">
    <text evidence="1">Decapping enzyme required for the removal of the 5'-end m7GpppN cap tethered to viral and host mRNAs to allow their decay in cells. May therefore accelerate viral and cellular mRNA turnover to eliminate competing host mRNAs and allow stage-specific synthesis of viral proteins. Acceleration of the turnover of cellular transcripts may even promote the shutoff of host protein synthesis. Does not cleave unmethylated RNAs or RNAs shorter than 24 nucleotides (By similarity).</text>
</comment>
<comment type="cofactor">
    <cofactor evidence="1">
        <name>Mg(2+)</name>
        <dbReference type="ChEBI" id="CHEBI:18420"/>
    </cofactor>
    <cofactor evidence="1">
        <name>Mn(2+)</name>
        <dbReference type="ChEBI" id="CHEBI:29035"/>
    </cofactor>
</comment>
<comment type="induction">
    <text>Expressed in the early phase of the viral replicative cycle.</text>
</comment>
<comment type="similarity">
    <text evidence="3">Belongs to the Nudix hydrolase family.</text>
</comment>
<sequence length="213" mass="24982">MGITMDEEVIFETPRELISIKRIKDIPRSKDTHVFAACITSDGYPLIGARRTSFAFQAILSQQNSDSIFRVSTKLLRFMYYNELREIFRRLRKGSINNIDPHFEELILLGGKLDKKESIKDCLRRELKEESDERITVKEFGNVILKLTTQDKLFNKVYIGYCMSCFINQSLEDLSHTSIYNVEIRKIKSLNDCINDDKYEYLSYIYNMLVNSK</sequence>
<dbReference type="EC" id="3.1.3.-"/>
<dbReference type="EMBL" id="L22579">
    <property type="protein sequence ID" value="AAA60847.1"/>
    <property type="molecule type" value="Genomic_DNA"/>
</dbReference>
<dbReference type="PIR" id="T28537">
    <property type="entry name" value="T28537"/>
</dbReference>
<dbReference type="SMR" id="P0DOU6"/>
<dbReference type="KEGG" id="vg:1486425"/>
<dbReference type="Proteomes" id="UP000119805">
    <property type="component" value="Segment"/>
</dbReference>
<dbReference type="GO" id="GO:0016787">
    <property type="term" value="F:hydrolase activity"/>
    <property type="evidence" value="ECO:0007669"/>
    <property type="project" value="UniProtKB-KW"/>
</dbReference>
<dbReference type="GO" id="GO:0046872">
    <property type="term" value="F:metal ion binding"/>
    <property type="evidence" value="ECO:0007669"/>
    <property type="project" value="UniProtKB-KW"/>
</dbReference>
<dbReference type="Gene3D" id="3.90.79.10">
    <property type="entry name" value="Nucleoside Triphosphate Pyrophosphohydrolase"/>
    <property type="match status" value="1"/>
</dbReference>
<dbReference type="InterPro" id="IPR015797">
    <property type="entry name" value="NUDIX_hydrolase-like_dom_sf"/>
</dbReference>
<dbReference type="InterPro" id="IPR000086">
    <property type="entry name" value="NUDIX_hydrolase_dom"/>
</dbReference>
<dbReference type="InterPro" id="IPR003300">
    <property type="entry name" value="Viral_VD9"/>
</dbReference>
<dbReference type="Pfam" id="PF00293">
    <property type="entry name" value="NUDIX"/>
    <property type="match status" value="1"/>
</dbReference>
<dbReference type="PRINTS" id="PR01363">
    <property type="entry name" value="VD09PROTEIN"/>
</dbReference>
<dbReference type="SUPFAM" id="SSF55811">
    <property type="entry name" value="Nudix"/>
    <property type="match status" value="1"/>
</dbReference>
<dbReference type="PROSITE" id="PS51462">
    <property type="entry name" value="NUDIX"/>
    <property type="match status" value="1"/>
</dbReference>
<dbReference type="PROSITE" id="PS00893">
    <property type="entry name" value="NUDIX_BOX"/>
    <property type="match status" value="1"/>
</dbReference>
<keyword id="KW-0378">Hydrolase</keyword>
<keyword id="KW-0460">Magnesium</keyword>
<keyword id="KW-0464">Manganese</keyword>
<keyword id="KW-0479">Metal-binding</keyword>
<accession>P0DOU6</accession>
<accession>P33070</accession>
<proteinExistence type="evidence at transcript level"/>
<organismHost>
    <name type="scientific">Homo sapiens</name>
    <name type="common">Human</name>
    <dbReference type="NCBI Taxonomy" id="9606"/>
</organismHost>
<feature type="chain" id="PRO_0000448114" description="mRNA-decapping protein D9">
    <location>
        <begin position="1"/>
        <end position="213"/>
    </location>
</feature>
<feature type="domain" description="Nudix hydrolase" evidence="2">
    <location>
        <begin position="30"/>
        <end position="209"/>
    </location>
</feature>
<feature type="short sequence motif" description="Nudix box">
    <location>
        <begin position="111"/>
        <end position="132"/>
    </location>
</feature>
<feature type="active site" description="Nucleophile" evidence="1">
    <location>
        <position position="126"/>
    </location>
</feature>
<feature type="binding site" evidence="1">
    <location>
        <position position="117"/>
    </location>
    <ligand>
        <name>Mg(2+)</name>
        <dbReference type="ChEBI" id="CHEBI:18420"/>
    </ligand>
</feature>
<feature type="binding site" evidence="1">
    <location>
        <position position="130"/>
    </location>
    <ligand>
        <name>Mg(2+)</name>
        <dbReference type="ChEBI" id="CHEBI:18420"/>
    </ligand>
</feature>
<feature type="binding site" evidence="1">
    <location>
        <position position="151"/>
    </location>
    <ligand>
        <name>Mg(2+)</name>
        <dbReference type="ChEBI" id="CHEBI:18420"/>
    </ligand>
</feature>
<protein>
    <recommendedName>
        <fullName>mRNA-decapping protein D9</fullName>
        <ecNumber>3.1.3.-</ecNumber>
    </recommendedName>
</protein>
<gene>
    <name type="ORF">D9R</name>
</gene>
<name>D9_VARV</name>
<organism>
    <name type="scientific">Variola virus</name>
    <dbReference type="NCBI Taxonomy" id="10255"/>
    <lineage>
        <taxon>Viruses</taxon>
        <taxon>Varidnaviria</taxon>
        <taxon>Bamfordvirae</taxon>
        <taxon>Nucleocytoviricota</taxon>
        <taxon>Pokkesviricetes</taxon>
        <taxon>Chitovirales</taxon>
        <taxon>Poxviridae</taxon>
        <taxon>Chordopoxvirinae</taxon>
        <taxon>Orthopoxvirus</taxon>
    </lineage>
</organism>
<reference key="1">
    <citation type="journal article" date="1993" name="Nature">
        <title>Potential virulence determinants in terminal regions of variola smallpox virus genome.</title>
        <authorList>
            <person name="Massung R.F."/>
            <person name="Esposito J.J."/>
            <person name="Liu L.I."/>
            <person name="Qi J."/>
            <person name="Utterback T.R."/>
            <person name="Knight J.C."/>
            <person name="Aubin L."/>
            <person name="Yuran T.E."/>
            <person name="Parsons J.M."/>
            <person name="Loparev V.N."/>
            <person name="Selivanov N.A."/>
            <person name="Cavallaro K.F."/>
            <person name="Kerlavage A.R."/>
            <person name="Mahy B.W.J."/>
            <person name="Venter J.C."/>
        </authorList>
    </citation>
    <scope>NUCLEOTIDE SEQUENCE [GENOMIC DNA]</scope>
    <source>
        <strain>Bangladesh-1975</strain>
    </source>
</reference>
<evidence type="ECO:0000250" key="1"/>
<evidence type="ECO:0000255" key="2">
    <source>
        <dbReference type="PROSITE-ProRule" id="PRU00794"/>
    </source>
</evidence>
<evidence type="ECO:0000305" key="3"/>